<evidence type="ECO:0000250" key="1"/>
<evidence type="ECO:0000250" key="2">
    <source>
        <dbReference type="UniProtKB" id="P62984"/>
    </source>
</evidence>
<evidence type="ECO:0000250" key="3">
    <source>
        <dbReference type="UniProtKB" id="P62986"/>
    </source>
</evidence>
<evidence type="ECO:0000250" key="4">
    <source>
        <dbReference type="UniProtKB" id="P62987"/>
    </source>
</evidence>
<evidence type="ECO:0000255" key="5">
    <source>
        <dbReference type="PROSITE-ProRule" id="PRU00214"/>
    </source>
</evidence>
<evidence type="ECO:0000305" key="6"/>
<feature type="chain" id="PRO_0000114794" description="Ubiquitin">
    <location>
        <begin position="1"/>
        <end position="76"/>
    </location>
</feature>
<feature type="chain" id="PRO_0000138749" description="Large ribosomal subunit protein eL40">
    <location>
        <begin position="77"/>
        <end position="128"/>
    </location>
</feature>
<feature type="domain" description="Ubiquitin-like" evidence="5">
    <location>
        <begin position="1"/>
        <end position="76"/>
    </location>
</feature>
<feature type="site" description="Interacts with activating enzyme">
    <location>
        <position position="54"/>
    </location>
</feature>
<feature type="site" description="Essential for function">
    <location>
        <position position="68"/>
    </location>
</feature>
<feature type="site" description="Interacts with activating enzyme">
    <location>
        <position position="72"/>
    </location>
</feature>
<feature type="modified residue" description="Phosphoserine; by PINK1" evidence="4">
    <location>
        <position position="65"/>
    </location>
</feature>
<feature type="modified residue" description="ADP-ribosylglycine" evidence="4">
    <location>
        <position position="76"/>
    </location>
</feature>
<feature type="modified residue" description="N6,N6,N6-trimethyllysine" evidence="3">
    <location>
        <position position="98"/>
    </location>
</feature>
<feature type="cross-link" description="Glycyl lysine isopeptide (Lys-Gly) (interchain with G-Cter in ubiquitin)" evidence="4">
    <location>
        <position position="6"/>
    </location>
</feature>
<feature type="cross-link" description="Glycyl lysine isopeptide (Lys-Gly) (interchain with G-Cter in ubiquitin)" evidence="4">
    <location>
        <position position="11"/>
    </location>
</feature>
<feature type="cross-link" description="Glycyl lysine isopeptide (Lys-Gly) (interchain with G-Cter in ubiquitin)" evidence="4">
    <location>
        <position position="27"/>
    </location>
</feature>
<feature type="cross-link" description="Glycyl lysine isopeptide (Lys-Gly) (interchain with G-Cter in ubiquitin)" evidence="4">
    <location>
        <position position="29"/>
    </location>
</feature>
<feature type="cross-link" description="Glycyl lysine isopeptide (Lys-Gly) (interchain with G-Cter in ubiquitin)" evidence="4">
    <location>
        <position position="33"/>
    </location>
</feature>
<feature type="cross-link" description="Glycyl lysine isopeptide (Lys-Gly) (interchain with G-Cter in ubiquitin)" evidence="4">
    <location>
        <position position="48"/>
    </location>
</feature>
<feature type="cross-link" description="Glycyl lysine isopeptide (Lys-Gly) (interchain with G-Cter in ubiquitin)" evidence="4">
    <location>
        <position position="63"/>
    </location>
</feature>
<feature type="cross-link" description="Glycyl lysine isopeptide (Gly-Lys) (interchain with K-? in acceptor proteins)" evidence="5">
    <location>
        <position position="76"/>
    </location>
</feature>
<gene>
    <name type="primary">UBA52</name>
    <name type="synonym">UBCEP2</name>
    <name type="ORF">B9</name>
</gene>
<accession>P63050</accession>
<accession>P63049</accession>
<accession>Q7JK34</accession>
<accession>Q9XSV1</accession>
<dbReference type="EMBL" id="AB032025">
    <property type="protein sequence ID" value="BAA83996.1"/>
    <property type="molecule type" value="mRNA"/>
</dbReference>
<dbReference type="EMBL" id="AJ388512">
    <property type="protein sequence ID" value="CAB46814.1"/>
    <property type="molecule type" value="mRNA"/>
</dbReference>
<dbReference type="RefSeq" id="NP_001121567.1">
    <property type="nucleotide sequence ID" value="NM_001128095.2"/>
</dbReference>
<dbReference type="RefSeq" id="XP_005632363.1">
    <property type="nucleotide sequence ID" value="XM_005632306.2"/>
</dbReference>
<dbReference type="RefSeq" id="XP_013977202.1">
    <property type="nucleotide sequence ID" value="XM_014121727.1"/>
</dbReference>
<dbReference type="RefSeq" id="XP_038282289.1">
    <property type="nucleotide sequence ID" value="XM_038426361.1"/>
</dbReference>
<dbReference type="SMR" id="P63050"/>
<dbReference type="FunCoup" id="P63050">
    <property type="interactions" value="2301"/>
</dbReference>
<dbReference type="STRING" id="9615.ENSCAFP00000021714"/>
<dbReference type="PaxDb" id="9612-ENSCAFP00000021714"/>
<dbReference type="Ensembl" id="ENSCAFT00000023383.5">
    <property type="protein sequence ID" value="ENSCAFP00000021714.3"/>
    <property type="gene ID" value="ENSCAFG00000014723.5"/>
</dbReference>
<dbReference type="Ensembl" id="ENSCAFT00030029916.1">
    <property type="protein sequence ID" value="ENSCAFP00030026075.1"/>
    <property type="gene ID" value="ENSCAFG00030016247.1"/>
</dbReference>
<dbReference type="Ensembl" id="ENSCAFT00040031071.1">
    <property type="protein sequence ID" value="ENSCAFP00040027010.1"/>
    <property type="gene ID" value="ENSCAFG00040016838.1"/>
</dbReference>
<dbReference type="Ensembl" id="ENSCAFT00040042825.1">
    <property type="protein sequence ID" value="ENSCAFP00040037359.1"/>
    <property type="gene ID" value="ENSCAFG00040023038.1"/>
</dbReference>
<dbReference type="Ensembl" id="ENSCAFT00845036939.1">
    <property type="protein sequence ID" value="ENSCAFP00845028922.1"/>
    <property type="gene ID" value="ENSCAFG00845020932.1"/>
</dbReference>
<dbReference type="GeneID" id="403722"/>
<dbReference type="KEGG" id="cfa:403722"/>
<dbReference type="CTD" id="7311"/>
<dbReference type="VEuPathDB" id="HostDB:ENSCAFG00845020932"/>
<dbReference type="VGNC" id="VGNC:59398">
    <property type="gene designation" value="UBA52"/>
</dbReference>
<dbReference type="eggNOG" id="KOG0003">
    <property type="taxonomic scope" value="Eukaryota"/>
</dbReference>
<dbReference type="GeneTree" id="ENSGT00940000153593"/>
<dbReference type="HOGENOM" id="CLU_010412_3_4_1"/>
<dbReference type="InParanoid" id="P63050"/>
<dbReference type="OMA" id="CGRCSQL"/>
<dbReference type="OrthoDB" id="428577at2759"/>
<dbReference type="TreeFam" id="TF352129"/>
<dbReference type="Reactome" id="R-CFA-110312">
    <property type="pathway name" value="Translesion synthesis by REV1"/>
</dbReference>
<dbReference type="Reactome" id="R-CFA-110314">
    <property type="pathway name" value="Recognition of DNA damage by PCNA-containing replication complex"/>
</dbReference>
<dbReference type="Reactome" id="R-CFA-110320">
    <property type="pathway name" value="Translesion Synthesis by POLH"/>
</dbReference>
<dbReference type="Reactome" id="R-CFA-1169091">
    <property type="pathway name" value="Activation of NF-kappaB in B cells"/>
</dbReference>
<dbReference type="Reactome" id="R-CFA-1234176">
    <property type="pathway name" value="Oxygen-dependent proline hydroxylation of Hypoxia-inducible Factor Alpha"/>
</dbReference>
<dbReference type="Reactome" id="R-CFA-1253288">
    <property type="pathway name" value="Downregulation of ERBB4 signaling"/>
</dbReference>
<dbReference type="Reactome" id="R-CFA-1295596">
    <property type="pathway name" value="Spry regulation of FGF signaling"/>
</dbReference>
<dbReference type="Reactome" id="R-CFA-156827">
    <property type="pathway name" value="L13a-mediated translational silencing of Ceruloplasmin expression"/>
</dbReference>
<dbReference type="Reactome" id="R-CFA-168638">
    <property type="pathway name" value="NOD1/2 Signaling Pathway"/>
</dbReference>
<dbReference type="Reactome" id="R-CFA-174048">
    <property type="pathway name" value="APC/C:Cdc20 mediated degradation of Cyclin B"/>
</dbReference>
<dbReference type="Reactome" id="R-CFA-174084">
    <property type="pathway name" value="Autodegradation of Cdh1 by Cdh1:APC/C"/>
</dbReference>
<dbReference type="Reactome" id="R-CFA-174113">
    <property type="pathway name" value="SCF-beta-TrCP mediated degradation of Emi1"/>
</dbReference>
<dbReference type="Reactome" id="R-CFA-174154">
    <property type="pathway name" value="APC/C:Cdc20 mediated degradation of Securin"/>
</dbReference>
<dbReference type="Reactome" id="R-CFA-174178">
    <property type="pathway name" value="APC/C:Cdh1 mediated degradation of Cdc20 and other APC/C:Cdh1 targeted proteins in late mitosis/early G1"/>
</dbReference>
<dbReference type="Reactome" id="R-CFA-174184">
    <property type="pathway name" value="Cdc20:Phospho-APC/C mediated degradation of Cyclin A"/>
</dbReference>
<dbReference type="Reactome" id="R-CFA-179409">
    <property type="pathway name" value="APC-Cdc20 mediated degradation of Nek2A"/>
</dbReference>
<dbReference type="Reactome" id="R-CFA-1799339">
    <property type="pathway name" value="SRP-dependent cotranslational protein targeting to membrane"/>
</dbReference>
<dbReference type="Reactome" id="R-CFA-182971">
    <property type="pathway name" value="EGFR downregulation"/>
</dbReference>
<dbReference type="Reactome" id="R-CFA-187577">
    <property type="pathway name" value="SCF(Skp2)-mediated degradation of p27/p21"/>
</dbReference>
<dbReference type="Reactome" id="R-CFA-195253">
    <property type="pathway name" value="Degradation of beta-catenin by the destruction complex"/>
</dbReference>
<dbReference type="Reactome" id="R-CFA-201681">
    <property type="pathway name" value="TCF dependent signaling in response to WNT"/>
</dbReference>
<dbReference type="Reactome" id="R-CFA-202424">
    <property type="pathway name" value="Downstream TCR signaling"/>
</dbReference>
<dbReference type="Reactome" id="R-CFA-205043">
    <property type="pathway name" value="NRIF signals cell death from the nucleus"/>
</dbReference>
<dbReference type="Reactome" id="R-CFA-209543">
    <property type="pathway name" value="p75NTR recruits signalling complexes"/>
</dbReference>
<dbReference type="Reactome" id="R-CFA-209560">
    <property type="pathway name" value="NF-kB is activated and signals survival"/>
</dbReference>
<dbReference type="Reactome" id="R-CFA-2122948">
    <property type="pathway name" value="Activated NOTCH1 Transmits Signal to the Nucleus"/>
</dbReference>
<dbReference type="Reactome" id="R-CFA-2173788">
    <property type="pathway name" value="Downregulation of TGF-beta receptor signaling"/>
</dbReference>
<dbReference type="Reactome" id="R-CFA-2173791">
    <property type="pathway name" value="TGF-beta receptor signaling in EMT (epithelial to mesenchymal transition)"/>
</dbReference>
<dbReference type="Reactome" id="R-CFA-2173795">
    <property type="pathway name" value="Downregulation of SMAD2/3:SMAD4 transcriptional activity"/>
</dbReference>
<dbReference type="Reactome" id="R-CFA-2173796">
    <property type="pathway name" value="SMAD2/SMAD3:SMAD4 heterotrimer regulates transcription"/>
</dbReference>
<dbReference type="Reactome" id="R-CFA-2467813">
    <property type="pathway name" value="Separation of Sister Chromatids"/>
</dbReference>
<dbReference type="Reactome" id="R-CFA-2559580">
    <property type="pathway name" value="Oxidative Stress Induced Senescence"/>
</dbReference>
<dbReference type="Reactome" id="R-CFA-2559582">
    <property type="pathway name" value="Senescence-Associated Secretory Phenotype (SASP)"/>
</dbReference>
<dbReference type="Reactome" id="R-CFA-2559585">
    <property type="pathway name" value="Oncogene Induced Senescence"/>
</dbReference>
<dbReference type="Reactome" id="R-CFA-2565942">
    <property type="pathway name" value="Regulation of PLK1 Activity at G2/M Transition"/>
</dbReference>
<dbReference type="Reactome" id="R-CFA-2672351">
    <property type="pathway name" value="Stimuli-sensing channels"/>
</dbReference>
<dbReference type="Reactome" id="R-CFA-2871837">
    <property type="pathway name" value="FCERI mediated NF-kB activation"/>
</dbReference>
<dbReference type="Reactome" id="R-CFA-3134975">
    <property type="pathway name" value="Regulation of innate immune responses to cytosolic DNA"/>
</dbReference>
<dbReference type="Reactome" id="R-CFA-349425">
    <property type="pathway name" value="Autodegradation of the E3 ubiquitin ligase COP1"/>
</dbReference>
<dbReference type="Reactome" id="R-CFA-3769402">
    <property type="pathway name" value="Deactivation of the beta-catenin transactivating complex"/>
</dbReference>
<dbReference type="Reactome" id="R-CFA-382556">
    <property type="pathway name" value="ABC-family proteins mediated transport"/>
</dbReference>
<dbReference type="Reactome" id="R-CFA-445989">
    <property type="pathway name" value="TAK1-dependent IKK and NF-kappa-B activation"/>
</dbReference>
<dbReference type="Reactome" id="R-CFA-450302">
    <property type="pathway name" value="activated TAK1 mediates p38 MAPK activation"/>
</dbReference>
<dbReference type="Reactome" id="R-CFA-450321">
    <property type="pathway name" value="JNK (c-Jun kinases) phosphorylation and activation mediated by activated human TAK1"/>
</dbReference>
<dbReference type="Reactome" id="R-CFA-450408">
    <property type="pathway name" value="AUF1 (hnRNP D0) binds and destabilizes mRNA"/>
</dbReference>
<dbReference type="Reactome" id="R-CFA-4608870">
    <property type="pathway name" value="Asymmetric localization of PCP proteins"/>
</dbReference>
<dbReference type="Reactome" id="R-CFA-4641257">
    <property type="pathway name" value="Degradation of AXIN"/>
</dbReference>
<dbReference type="Reactome" id="R-CFA-4641258">
    <property type="pathway name" value="Degradation of DVL"/>
</dbReference>
<dbReference type="Reactome" id="R-CFA-4641263">
    <property type="pathway name" value="Regulation of FZD by ubiquitination"/>
</dbReference>
<dbReference type="Reactome" id="R-CFA-5205685">
    <property type="pathway name" value="PINK1-PRKN Mediated Mitophagy"/>
</dbReference>
<dbReference type="Reactome" id="R-CFA-532668">
    <property type="pathway name" value="N-glycan trimming in the ER and Calnexin/Calreticulin cycle"/>
</dbReference>
<dbReference type="Reactome" id="R-CFA-5357905">
    <property type="pathway name" value="Regulation of TNFR1 signaling"/>
</dbReference>
<dbReference type="Reactome" id="R-CFA-5357956">
    <property type="pathway name" value="TNFR1-induced NF-kappa-B signaling pathway"/>
</dbReference>
<dbReference type="Reactome" id="R-CFA-5358346">
    <property type="pathway name" value="Hedgehog ligand biogenesis"/>
</dbReference>
<dbReference type="Reactome" id="R-CFA-5607761">
    <property type="pathway name" value="Dectin-1 mediated noncanonical NF-kB signaling"/>
</dbReference>
<dbReference type="Reactome" id="R-CFA-5607764">
    <property type="pathway name" value="CLEC7A (Dectin-1) signaling"/>
</dbReference>
<dbReference type="Reactome" id="R-CFA-5610780">
    <property type="pathway name" value="Degradation of GLI1 by the proteasome"/>
</dbReference>
<dbReference type="Reactome" id="R-CFA-5610785">
    <property type="pathway name" value="GLI3 is processed to GLI3R by the proteasome"/>
</dbReference>
<dbReference type="Reactome" id="R-CFA-5632684">
    <property type="pathway name" value="Hedgehog 'on' state"/>
</dbReference>
<dbReference type="Reactome" id="R-CFA-5654726">
    <property type="pathway name" value="Negative regulation of FGFR1 signaling"/>
</dbReference>
<dbReference type="Reactome" id="R-CFA-5654727">
    <property type="pathway name" value="Negative regulation of FGFR2 signaling"/>
</dbReference>
<dbReference type="Reactome" id="R-CFA-5654732">
    <property type="pathway name" value="Negative regulation of FGFR3 signaling"/>
</dbReference>
<dbReference type="Reactome" id="R-CFA-5654733">
    <property type="pathway name" value="Negative regulation of FGFR4 signaling"/>
</dbReference>
<dbReference type="Reactome" id="R-CFA-5655862">
    <property type="pathway name" value="Translesion synthesis by POLK"/>
</dbReference>
<dbReference type="Reactome" id="R-CFA-5656121">
    <property type="pathway name" value="Translesion synthesis by POLI"/>
</dbReference>
<dbReference type="Reactome" id="R-CFA-5656169">
    <property type="pathway name" value="Termination of translesion DNA synthesis"/>
</dbReference>
<dbReference type="Reactome" id="R-CFA-5668541">
    <property type="pathway name" value="TNFR2 non-canonical NF-kB pathway"/>
</dbReference>
<dbReference type="Reactome" id="R-CFA-5675221">
    <property type="pathway name" value="Negative regulation of MAPK pathway"/>
</dbReference>
<dbReference type="Reactome" id="R-CFA-5675482">
    <property type="pathway name" value="Regulation of necroptotic cell death"/>
</dbReference>
<dbReference type="Reactome" id="R-CFA-5676590">
    <property type="pathway name" value="NIK--&gt;noncanonical NF-kB signaling"/>
</dbReference>
<dbReference type="Reactome" id="R-CFA-5684264">
    <property type="pathway name" value="MAP3K8 (TPL2)-dependent MAPK1/3 activation"/>
</dbReference>
<dbReference type="Reactome" id="R-CFA-5685942">
    <property type="pathway name" value="HDR through Homologous Recombination (HRR)"/>
</dbReference>
<dbReference type="Reactome" id="R-CFA-5687128">
    <property type="pathway name" value="MAPK6/MAPK4 signaling"/>
</dbReference>
<dbReference type="Reactome" id="R-CFA-5689603">
    <property type="pathway name" value="UCH proteinases"/>
</dbReference>
<dbReference type="Reactome" id="R-CFA-5689877">
    <property type="pathway name" value="Josephin domain DUBs"/>
</dbReference>
<dbReference type="Reactome" id="R-CFA-5689880">
    <property type="pathway name" value="Ub-specific processing proteases"/>
</dbReference>
<dbReference type="Reactome" id="R-CFA-5689896">
    <property type="pathway name" value="Ovarian tumor domain proteases"/>
</dbReference>
<dbReference type="Reactome" id="R-CFA-5689901">
    <property type="pathway name" value="Metalloprotease DUBs"/>
</dbReference>
<dbReference type="Reactome" id="R-CFA-5693565">
    <property type="pathway name" value="Recruitment and ATM-mediated phosphorylation of repair and signaling proteins at DNA double strand breaks"/>
</dbReference>
<dbReference type="Reactome" id="R-CFA-5696394">
    <property type="pathway name" value="DNA Damage Recognition in GG-NER"/>
</dbReference>
<dbReference type="Reactome" id="R-CFA-5696395">
    <property type="pathway name" value="Formation of Incision Complex in GG-NER"/>
</dbReference>
<dbReference type="Reactome" id="R-CFA-5696397">
    <property type="pathway name" value="Gap-filling DNA repair synthesis and ligation in GG-NER"/>
</dbReference>
<dbReference type="Reactome" id="R-CFA-5696400">
    <property type="pathway name" value="Dual Incision in GG-NER"/>
</dbReference>
<dbReference type="Reactome" id="R-CFA-6781823">
    <property type="pathway name" value="Formation of TC-NER Pre-Incision Complex"/>
</dbReference>
<dbReference type="Reactome" id="R-CFA-6782135">
    <property type="pathway name" value="Dual incision in TC-NER"/>
</dbReference>
<dbReference type="Reactome" id="R-CFA-6782210">
    <property type="pathway name" value="Gap-filling DNA repair synthesis and ligation in TC-NER"/>
</dbReference>
<dbReference type="Reactome" id="R-CFA-6783310">
    <property type="pathway name" value="Fanconi Anemia Pathway"/>
</dbReference>
<dbReference type="Reactome" id="R-CFA-6791226">
    <property type="pathway name" value="Major pathway of rRNA processing in the nucleolus and cytosol"/>
</dbReference>
<dbReference type="Reactome" id="R-CFA-6804756">
    <property type="pathway name" value="Regulation of TP53 Activity through Phosphorylation"/>
</dbReference>
<dbReference type="Reactome" id="R-CFA-6804757">
    <property type="pathway name" value="Regulation of TP53 Degradation"/>
</dbReference>
<dbReference type="Reactome" id="R-CFA-6804760">
    <property type="pathway name" value="Regulation of TP53 Activity through Methylation"/>
</dbReference>
<dbReference type="Reactome" id="R-CFA-6807004">
    <property type="pathway name" value="Negative regulation of MET activity"/>
</dbReference>
<dbReference type="Reactome" id="R-CFA-68867">
    <property type="pathway name" value="Assembly of the pre-replicative complex"/>
</dbReference>
<dbReference type="Reactome" id="R-CFA-68949">
    <property type="pathway name" value="Orc1 removal from chromatin"/>
</dbReference>
<dbReference type="Reactome" id="R-CFA-69017">
    <property type="pathway name" value="CDK-mediated phosphorylation and removal of Cdc6"/>
</dbReference>
<dbReference type="Reactome" id="R-CFA-69231">
    <property type="pathway name" value="Cyclin D associated events in G1"/>
</dbReference>
<dbReference type="Reactome" id="R-CFA-69481">
    <property type="pathway name" value="G2/M Checkpoints"/>
</dbReference>
<dbReference type="Reactome" id="R-CFA-69541">
    <property type="pathway name" value="Stabilization of p53"/>
</dbReference>
<dbReference type="Reactome" id="R-CFA-69601">
    <property type="pathway name" value="Ubiquitin Mediated Degradation of Phosphorylated Cdc25A"/>
</dbReference>
<dbReference type="Reactome" id="R-CFA-72689">
    <property type="pathway name" value="Formation of a pool of free 40S subunits"/>
</dbReference>
<dbReference type="Reactome" id="R-CFA-72706">
    <property type="pathway name" value="GTP hydrolysis and joining of the 60S ribosomal subunit"/>
</dbReference>
<dbReference type="Reactome" id="R-CFA-75815">
    <property type="pathway name" value="Ubiquitin-dependent degradation of Cyclin D"/>
</dbReference>
<dbReference type="Reactome" id="R-CFA-8849469">
    <property type="pathway name" value="PTK6 Regulates RTKs and Their Effectors AKT1 and DOK1"/>
</dbReference>
<dbReference type="Reactome" id="R-CFA-8852276">
    <property type="pathway name" value="The role of GTSE1 in G2/M progression after G2 checkpoint"/>
</dbReference>
<dbReference type="Reactome" id="R-CFA-8854050">
    <property type="pathway name" value="FBXL7 down-regulates AURKA during mitotic entry and in early mitosis"/>
</dbReference>
<dbReference type="Reactome" id="R-CFA-8856825">
    <property type="pathway name" value="Cargo recognition for clathrin-mediated endocytosis"/>
</dbReference>
<dbReference type="Reactome" id="R-CFA-8856828">
    <property type="pathway name" value="Clathrin-mediated endocytosis"/>
</dbReference>
<dbReference type="Reactome" id="R-CFA-8863795">
    <property type="pathway name" value="Downregulation of ERBB2 signaling"/>
</dbReference>
<dbReference type="Reactome" id="R-CFA-8866427">
    <property type="pathway name" value="VLDLR internalisation and degradation"/>
</dbReference>
<dbReference type="Reactome" id="R-CFA-8866652">
    <property type="pathway name" value="Synthesis of active ubiquitin: roles of E1 and E2 enzymes"/>
</dbReference>
<dbReference type="Reactome" id="R-CFA-8866654">
    <property type="pathway name" value="E3 ubiquitin ligases ubiquitinate target proteins"/>
</dbReference>
<dbReference type="Reactome" id="R-CFA-8939902">
    <property type="pathway name" value="Regulation of RUNX2 expression and activity"/>
</dbReference>
<dbReference type="Reactome" id="R-CFA-8941858">
    <property type="pathway name" value="Regulation of RUNX3 expression and activity"/>
</dbReference>
<dbReference type="Reactome" id="R-CFA-8948747">
    <property type="pathway name" value="Regulation of PTEN localization"/>
</dbReference>
<dbReference type="Reactome" id="R-CFA-8948751">
    <property type="pathway name" value="Regulation of PTEN stability and activity"/>
</dbReference>
<dbReference type="Reactome" id="R-CFA-8951664">
    <property type="pathway name" value="Neddylation"/>
</dbReference>
<dbReference type="Reactome" id="R-CFA-901032">
    <property type="pathway name" value="ER Quality Control Compartment (ERQC)"/>
</dbReference>
<dbReference type="Reactome" id="R-CFA-9020702">
    <property type="pathway name" value="Interleukin-1 signaling"/>
</dbReference>
<dbReference type="Reactome" id="R-CFA-9033241">
    <property type="pathway name" value="Peroxisomal protein import"/>
</dbReference>
<dbReference type="Reactome" id="R-CFA-909733">
    <property type="pathway name" value="Interferon alpha/beta signaling"/>
</dbReference>
<dbReference type="Reactome" id="R-CFA-912631">
    <property type="pathway name" value="Regulation of signaling by CBL"/>
</dbReference>
<dbReference type="Reactome" id="R-CFA-917729">
    <property type="pathway name" value="Endosomal Sorting Complex Required For Transport (ESCRT)"/>
</dbReference>
<dbReference type="Reactome" id="R-CFA-917937">
    <property type="pathway name" value="Iron uptake and transport"/>
</dbReference>
<dbReference type="Reactome" id="R-CFA-936964">
    <property type="pathway name" value="Activation of IRF3, IRF7 mediated by TBK1, IKKEpsilon (IKBKE)"/>
</dbReference>
<dbReference type="Reactome" id="R-CFA-937039">
    <property type="pathway name" value="IRAK1 recruits IKK complex"/>
</dbReference>
<dbReference type="Reactome" id="R-CFA-937041">
    <property type="pathway name" value="IKK complex recruitment mediated by RIP1"/>
</dbReference>
<dbReference type="Reactome" id="R-CFA-937042">
    <property type="pathway name" value="IRAK2 mediated activation of TAK1 complex"/>
</dbReference>
<dbReference type="Reactome" id="R-CFA-937072">
    <property type="pathway name" value="TRAF6-mediated induction of TAK1 complex within TLR4 complex"/>
</dbReference>
<dbReference type="Reactome" id="R-CFA-9645460">
    <property type="pathway name" value="Alpha-protein kinase 1 signaling pathway"/>
</dbReference>
<dbReference type="Reactome" id="R-CFA-9646399">
    <property type="pathway name" value="Aggrephagy"/>
</dbReference>
<dbReference type="Reactome" id="R-CFA-9648002">
    <property type="pathway name" value="RAS processing"/>
</dbReference>
<dbReference type="Reactome" id="R-CFA-9664873">
    <property type="pathway name" value="Pexophagy"/>
</dbReference>
<dbReference type="Reactome" id="R-CFA-9705462">
    <property type="pathway name" value="Inactivation of CSF3 (G-CSF) signaling"/>
</dbReference>
<dbReference type="Reactome" id="R-CFA-9706369">
    <property type="pathway name" value="Negative regulation of FLT3"/>
</dbReference>
<dbReference type="Reactome" id="R-CFA-975144">
    <property type="pathway name" value="IRAK1 recruits IKK complex upon TLR7/8 or 9 stimulation"/>
</dbReference>
<dbReference type="Reactome" id="R-CFA-975163">
    <property type="pathway name" value="IRAK2 mediated activation of TAK1 complex upon TLR7/8 or 9 stimulation"/>
</dbReference>
<dbReference type="Reactome" id="R-CFA-9755511">
    <property type="pathway name" value="KEAP1-NFE2L2 pathway"/>
</dbReference>
<dbReference type="Reactome" id="R-CFA-9758274">
    <property type="pathway name" value="Regulation of NF-kappa B signaling"/>
</dbReference>
<dbReference type="Reactome" id="R-CFA-975956">
    <property type="pathway name" value="Nonsense Mediated Decay (NMD) independent of the Exon Junction Complex (EJC)"/>
</dbReference>
<dbReference type="Reactome" id="R-CFA-975957">
    <property type="pathway name" value="Nonsense Mediated Decay (NMD) enhanced by the Exon Junction Complex (EJC)"/>
</dbReference>
<dbReference type="Reactome" id="R-CFA-9762114">
    <property type="pathway name" value="GSK3B and BTRC:CUL1-mediated-degradation of NFE2L2"/>
</dbReference>
<dbReference type="Reactome" id="R-CFA-9824878">
    <property type="pathway name" value="Regulation of TBK1, IKKEpsilon (IKBKE)-mediated activation of IRF3, IRF7"/>
</dbReference>
<dbReference type="Reactome" id="R-CFA-983168">
    <property type="pathway name" value="Antigen processing: Ubiquitination &amp; Proteasome degradation"/>
</dbReference>
<dbReference type="Reactome" id="R-CFA-9861718">
    <property type="pathway name" value="Regulation of pyruvate metabolism"/>
</dbReference>
<dbReference type="Proteomes" id="UP000002254">
    <property type="component" value="Chromosome 20"/>
</dbReference>
<dbReference type="Proteomes" id="UP000694429">
    <property type="component" value="Chromosome 20"/>
</dbReference>
<dbReference type="Proteomes" id="UP000694542">
    <property type="component" value="Chromosome 20"/>
</dbReference>
<dbReference type="Proteomes" id="UP000694542">
    <property type="component" value="Chromosome 4"/>
</dbReference>
<dbReference type="Proteomes" id="UP000805418">
    <property type="component" value="Chromosome 20"/>
</dbReference>
<dbReference type="Bgee" id="ENSCAFG00000018652">
    <property type="expression patterns" value="Expressed in cardiac muscle of left ventricle and 8 other cell types or tissues"/>
</dbReference>
<dbReference type="GO" id="GO:0005737">
    <property type="term" value="C:cytoplasm"/>
    <property type="evidence" value="ECO:0000318"/>
    <property type="project" value="GO_Central"/>
</dbReference>
<dbReference type="GO" id="GO:0022625">
    <property type="term" value="C:cytosolic large ribosomal subunit"/>
    <property type="evidence" value="ECO:0007669"/>
    <property type="project" value="Ensembl"/>
</dbReference>
<dbReference type="GO" id="GO:0005634">
    <property type="term" value="C:nucleus"/>
    <property type="evidence" value="ECO:0000318"/>
    <property type="project" value="GO_Central"/>
</dbReference>
<dbReference type="GO" id="GO:0045202">
    <property type="term" value="C:synapse"/>
    <property type="evidence" value="ECO:0007669"/>
    <property type="project" value="Ensembl"/>
</dbReference>
<dbReference type="GO" id="GO:0031386">
    <property type="term" value="F:protein tag activity"/>
    <property type="evidence" value="ECO:0000318"/>
    <property type="project" value="GO_Central"/>
</dbReference>
<dbReference type="GO" id="GO:0003735">
    <property type="term" value="F:structural constituent of ribosome"/>
    <property type="evidence" value="ECO:0007669"/>
    <property type="project" value="Ensembl"/>
</dbReference>
<dbReference type="GO" id="GO:0031625">
    <property type="term" value="F:ubiquitin protein ligase binding"/>
    <property type="evidence" value="ECO:0000318"/>
    <property type="project" value="GO_Central"/>
</dbReference>
<dbReference type="GO" id="GO:0002181">
    <property type="term" value="P:cytoplasmic translation"/>
    <property type="evidence" value="ECO:0007669"/>
    <property type="project" value="Ensembl"/>
</dbReference>
<dbReference type="GO" id="GO:0019941">
    <property type="term" value="P:modification-dependent protein catabolic process"/>
    <property type="evidence" value="ECO:0000318"/>
    <property type="project" value="GO_Central"/>
</dbReference>
<dbReference type="GO" id="GO:0016567">
    <property type="term" value="P:protein ubiquitination"/>
    <property type="evidence" value="ECO:0000318"/>
    <property type="project" value="GO_Central"/>
</dbReference>
<dbReference type="CDD" id="cd01803">
    <property type="entry name" value="Ubl_ubiquitin"/>
    <property type="match status" value="1"/>
</dbReference>
<dbReference type="FunFam" id="3.10.20.90:FF:000014">
    <property type="entry name" value="Ubiquitin-60S ribosomal L40 fusion"/>
    <property type="match status" value="1"/>
</dbReference>
<dbReference type="FunFam" id="4.10.1060.50:FF:000001">
    <property type="entry name" value="ubiquitin-60S ribosomal protein L40"/>
    <property type="match status" value="1"/>
</dbReference>
<dbReference type="Gene3D" id="4.10.1060.50">
    <property type="match status" value="1"/>
</dbReference>
<dbReference type="Gene3D" id="3.10.20.90">
    <property type="entry name" value="Phosphatidylinositol 3-kinase Catalytic Subunit, Chain A, domain 1"/>
    <property type="match status" value="1"/>
</dbReference>
<dbReference type="InterPro" id="IPR001975">
    <property type="entry name" value="Ribosomal_eL40_dom"/>
</dbReference>
<dbReference type="InterPro" id="IPR038587">
    <property type="entry name" value="Ribosomal_eL40_sf"/>
</dbReference>
<dbReference type="InterPro" id="IPR000626">
    <property type="entry name" value="Ubiquitin-like_dom"/>
</dbReference>
<dbReference type="InterPro" id="IPR029071">
    <property type="entry name" value="Ubiquitin-like_domsf"/>
</dbReference>
<dbReference type="InterPro" id="IPR019954">
    <property type="entry name" value="Ubiquitin_CS"/>
</dbReference>
<dbReference type="InterPro" id="IPR019956">
    <property type="entry name" value="Ubiquitin_dom"/>
</dbReference>
<dbReference type="InterPro" id="IPR050158">
    <property type="entry name" value="Ubiquitin_ubiquitin-like"/>
</dbReference>
<dbReference type="PANTHER" id="PTHR10666">
    <property type="entry name" value="UBIQUITIN"/>
    <property type="match status" value="1"/>
</dbReference>
<dbReference type="Pfam" id="PF01020">
    <property type="entry name" value="Ribosomal_L40e"/>
    <property type="match status" value="1"/>
</dbReference>
<dbReference type="Pfam" id="PF00240">
    <property type="entry name" value="ubiquitin"/>
    <property type="match status" value="1"/>
</dbReference>
<dbReference type="PRINTS" id="PR00348">
    <property type="entry name" value="UBIQUITIN"/>
</dbReference>
<dbReference type="SMART" id="SM01377">
    <property type="entry name" value="Ribosomal_L40e"/>
    <property type="match status" value="1"/>
</dbReference>
<dbReference type="SMART" id="SM00213">
    <property type="entry name" value="UBQ"/>
    <property type="match status" value="1"/>
</dbReference>
<dbReference type="SUPFAM" id="SSF54236">
    <property type="entry name" value="Ubiquitin-like"/>
    <property type="match status" value="1"/>
</dbReference>
<dbReference type="PROSITE" id="PS00299">
    <property type="entry name" value="UBIQUITIN_1"/>
    <property type="match status" value="1"/>
</dbReference>
<dbReference type="PROSITE" id="PS50053">
    <property type="entry name" value="UBIQUITIN_2"/>
    <property type="match status" value="1"/>
</dbReference>
<reference key="1">
    <citation type="submission" date="1999-08" db="EMBL/GenBank/DDBJ databases">
        <title>Canis familiaris ubiquitin gene.</title>
        <authorList>
            <person name="Kano R."/>
        </authorList>
    </citation>
    <scope>NUCLEOTIDE SEQUENCE [MRNA]</scope>
    <source>
        <strain>Cocker spaniel</strain>
        <tissue>Kidney</tissue>
    </source>
</reference>
<reference key="2">
    <citation type="journal article" date="2000" name="Anal. Biochem.">
        <title>A method for the large-scale cloning of nuclear proteins and nuclear targeting sequences on a functional basis.</title>
        <authorList>
            <person name="Pichon B."/>
            <person name="Mercan D."/>
            <person name="Pouillon V."/>
            <person name="Christophe-Hobertus C."/>
            <person name="Christophe D."/>
        </authorList>
    </citation>
    <scope>NUCLEOTIDE SEQUENCE [LARGE SCALE MRNA]</scope>
    <scope>SUBCELLULAR LOCATION</scope>
    <source>
        <tissue>Thyroid</tissue>
    </source>
</reference>
<comment type="function">
    <molecule>Ubiquitin</molecule>
    <text evidence="4">Exists either covalently attached to another protein, or free (unanchored). When covalently bound, it is conjugated to target proteins via an isopeptide bond either as a monomer (monoubiquitin), a polymer linked via different Lys residues of the ubiquitin (polyubiquitin chains) or a linear polymer linked via the initiator Met of the ubiquitin (linear polyubiquitin chains). Polyubiquitin chains, when attached to a target protein, have different functions depending on the Lys residue of the ubiquitin that is linked: Lys-6-linked may be involved in DNA repair; Lys-11-linked is involved in ERAD (endoplasmic reticulum-associated degradation) and in cell-cycle regulation; Lys-29-linked is involved in proteotoxic stress response and cell cycle; Lys-33-linked is involved in kinase modification; Lys-48-linked is involved in protein degradation via the proteasome; Lys-63-linked is involved in endocytosis, DNA-damage responses as well as in signaling processes leading to activation of the transcription factor NF-kappa-B. Linear polymer chains formed via attachment by the initiator Met lead to cell signaling. Ubiquitin is usually conjugated to Lys residues of target proteins, however, in rare cases, conjugation to Cys or Ser residues has been observed. When polyubiquitin is free (unanchored-polyubiquitin), it also has distinct roles, such as in activation of protein kinases, and in signaling.</text>
</comment>
<comment type="function">
    <molecule>Large ribosomal subunit protein eL40</molecule>
    <text evidence="4">Component of the 60S subunit of the ribosome. Ribosomal protein L40 is essential for translation of a subset of cellular transcripts, and especially for cap-dependent translation of vesicular stomatitis virus mRNAs.</text>
</comment>
<comment type="subunit">
    <molecule>Large ribosomal subunit protein eL40</molecule>
    <text evidence="4">Part of the 60S ribosomal subunit. Interacts with UBQLN1 (via UBA domain).</text>
</comment>
<comment type="subcellular location">
    <molecule>Ubiquitin</molecule>
    <subcellularLocation>
        <location evidence="1">Cytoplasm</location>
    </subcellularLocation>
    <subcellularLocation>
        <location>Nucleus</location>
    </subcellularLocation>
</comment>
<comment type="subcellular location">
    <molecule>Large ribosomal subunit protein eL40</molecule>
    <subcellularLocation>
        <location evidence="2">Cytoplasm</location>
    </subcellularLocation>
</comment>
<comment type="PTM">
    <molecule>Ubiquitin</molecule>
    <text evidence="4">Phosphorylated at Ser-65 by PINK1 during mitophagy. Phosphorylated ubiquitin specifically binds and activates parkin (PRKN), triggering mitophagy. Phosphorylation does not affect E1-mediated E2 charging of ubiquitin but affects discharging of E2 enzymes to form polyubiquitin chains. It also affects deubiquitination by deubiquitinase enzymes such as USP30.</text>
</comment>
<comment type="PTM">
    <molecule>Ubiquitin</molecule>
    <text evidence="4">Mono-ADP-ribosylated at the C-terminus by PARP9, a component of the PPAR9-DTX3L complex. ADP-ribosylation requires processing by E1 and E2 enzymes and prevents ubiquitin conjugation to substrates such as histones.</text>
</comment>
<comment type="PTM">
    <molecule>Large ribosomal subunit protein eL40</molecule>
    <text evidence="4">Trimethylation of Lys-98 ('Lys-22' of the mature chain) by SMYD5 promotes translation elongation and protein synthesis.</text>
</comment>
<comment type="miscellaneous">
    <text>Ubiquitin is encoded by 4 different genes. Uba52 and Rps27a genes code for a single copy of ubiquitin fused to the ribosomal proteins eL40 and eS31, respectively. UBB and UBC genes code for a polyubiquitin precursor with exact head to tail repeats, the number of repeats differ between species and strains.</text>
</comment>
<comment type="similarity">
    <text evidence="6">In the N-terminal section; belongs to the ubiquitin family.</text>
</comment>
<comment type="similarity">
    <text evidence="6">In the C-terminal section; belongs to the eukaryotic ribosomal protein eL40 family.</text>
</comment>
<organism>
    <name type="scientific">Canis lupus familiaris</name>
    <name type="common">Dog</name>
    <name type="synonym">Canis familiaris</name>
    <dbReference type="NCBI Taxonomy" id="9615"/>
    <lineage>
        <taxon>Eukaryota</taxon>
        <taxon>Metazoa</taxon>
        <taxon>Chordata</taxon>
        <taxon>Craniata</taxon>
        <taxon>Vertebrata</taxon>
        <taxon>Euteleostomi</taxon>
        <taxon>Mammalia</taxon>
        <taxon>Eutheria</taxon>
        <taxon>Laurasiatheria</taxon>
        <taxon>Carnivora</taxon>
        <taxon>Caniformia</taxon>
        <taxon>Canidae</taxon>
        <taxon>Canis</taxon>
    </lineage>
</organism>
<keyword id="KW-0013">ADP-ribosylation</keyword>
<keyword id="KW-0963">Cytoplasm</keyword>
<keyword id="KW-1017">Isopeptide bond</keyword>
<keyword id="KW-0488">Methylation</keyword>
<keyword id="KW-0539">Nucleus</keyword>
<keyword id="KW-0597">Phosphoprotein</keyword>
<keyword id="KW-1185">Reference proteome</keyword>
<keyword id="KW-0687">Ribonucleoprotein</keyword>
<keyword id="KW-0689">Ribosomal protein</keyword>
<keyword id="KW-0832">Ubl conjugation</keyword>
<sequence>MQIFVKTLTGKTITLEVEPSDTIENVKAKIQDKEGIPPDQQRLIFAGKQLEDGRTLSDYNIQKESTLHLVLRLRGGIIEPSLRQLAQKYNCDKMICRKCYARLHPRAVNCRKKKCGHTNNLRPKKKVK</sequence>
<proteinExistence type="evidence at transcript level"/>
<name>RL40_CANLF</name>
<protein>
    <recommendedName>
        <fullName evidence="6">Ubiquitin-ribosomal protein eL40 fusion protein</fullName>
    </recommendedName>
    <alternativeName>
        <fullName>Ubiquitin A-52 residue ribosomal protein fusion product 1</fullName>
    </alternativeName>
    <component>
        <recommendedName>
            <fullName>Ubiquitin</fullName>
        </recommendedName>
    </component>
    <component>
        <recommendedName>
            <fullName evidence="6">Large ribosomal subunit protein eL40</fullName>
        </recommendedName>
        <alternativeName>
            <fullName>60S ribosomal protein L40</fullName>
        </alternativeName>
        <alternativeName>
            <fullName>CEP52</fullName>
        </alternativeName>
    </component>
</protein>